<dbReference type="EC" id="1.1.1.22"/>
<dbReference type="EMBL" id="AF015609">
    <property type="protein sequence ID" value="AAB94865.1"/>
    <property type="molecule type" value="Genomic_DNA"/>
</dbReference>
<dbReference type="EMBL" id="AL009126">
    <property type="protein sequence ID" value="CAB15575.1"/>
    <property type="molecule type" value="Genomic_DNA"/>
</dbReference>
<dbReference type="PIR" id="F69727">
    <property type="entry name" value="F69727"/>
</dbReference>
<dbReference type="RefSeq" id="NP_391438.1">
    <property type="nucleotide sequence ID" value="NC_000964.3"/>
</dbReference>
<dbReference type="RefSeq" id="WP_003242596.1">
    <property type="nucleotide sequence ID" value="NZ_OZ025638.1"/>
</dbReference>
<dbReference type="SMR" id="O32271"/>
<dbReference type="FunCoup" id="O32271">
    <property type="interactions" value="610"/>
</dbReference>
<dbReference type="STRING" id="224308.BSU35580"/>
<dbReference type="PaxDb" id="224308-BSU35580"/>
<dbReference type="EnsemblBacteria" id="CAB15575">
    <property type="protein sequence ID" value="CAB15575"/>
    <property type="gene ID" value="BSU_35580"/>
</dbReference>
<dbReference type="GeneID" id="936766"/>
<dbReference type="KEGG" id="bsu:BSU35580"/>
<dbReference type="PATRIC" id="fig|224308.179.peg.3849"/>
<dbReference type="eggNOG" id="COG1004">
    <property type="taxonomic scope" value="Bacteria"/>
</dbReference>
<dbReference type="InParanoid" id="O32271"/>
<dbReference type="OrthoDB" id="9803238at2"/>
<dbReference type="PhylomeDB" id="O32271"/>
<dbReference type="BioCyc" id="BSUB:BSU35580-MONOMER"/>
<dbReference type="BioCyc" id="MetaCyc:BSU35580-MONOMER"/>
<dbReference type="UniPathway" id="UPA00038">
    <property type="reaction ID" value="UER00491"/>
</dbReference>
<dbReference type="Proteomes" id="UP000001570">
    <property type="component" value="Chromosome"/>
</dbReference>
<dbReference type="GO" id="GO:0005737">
    <property type="term" value="C:cytoplasm"/>
    <property type="evidence" value="ECO:0007669"/>
    <property type="project" value="UniProtKB-SubCell"/>
</dbReference>
<dbReference type="GO" id="GO:0051287">
    <property type="term" value="F:NAD binding"/>
    <property type="evidence" value="ECO:0000250"/>
    <property type="project" value="UniProtKB"/>
</dbReference>
<dbReference type="GO" id="GO:0003979">
    <property type="term" value="F:UDP-glucose 6-dehydrogenase activity"/>
    <property type="evidence" value="ECO:0000250"/>
    <property type="project" value="UniProtKB"/>
</dbReference>
<dbReference type="GO" id="GO:0071555">
    <property type="term" value="P:cell wall organization"/>
    <property type="evidence" value="ECO:0007669"/>
    <property type="project" value="UniProtKB-KW"/>
</dbReference>
<dbReference type="GO" id="GO:0000271">
    <property type="term" value="P:polysaccharide biosynthetic process"/>
    <property type="evidence" value="ECO:0007669"/>
    <property type="project" value="InterPro"/>
</dbReference>
<dbReference type="GO" id="GO:0006065">
    <property type="term" value="P:UDP-glucuronate biosynthetic process"/>
    <property type="evidence" value="ECO:0007669"/>
    <property type="project" value="UniProtKB-UniPathway"/>
</dbReference>
<dbReference type="FunFam" id="1.20.5.100:FF:000001">
    <property type="entry name" value="UDP-glucose 6-dehydrogenase"/>
    <property type="match status" value="1"/>
</dbReference>
<dbReference type="Gene3D" id="1.20.5.100">
    <property type="entry name" value="Cytochrome c1, transmembrane anchor, C-terminal"/>
    <property type="match status" value="1"/>
</dbReference>
<dbReference type="Gene3D" id="3.40.50.720">
    <property type="entry name" value="NAD(P)-binding Rossmann-like Domain"/>
    <property type="match status" value="2"/>
</dbReference>
<dbReference type="InterPro" id="IPR008927">
    <property type="entry name" value="6-PGluconate_DH-like_C_sf"/>
</dbReference>
<dbReference type="InterPro" id="IPR036291">
    <property type="entry name" value="NAD(P)-bd_dom_sf"/>
</dbReference>
<dbReference type="InterPro" id="IPR017476">
    <property type="entry name" value="UDP-Glc/GDP-Man"/>
</dbReference>
<dbReference type="InterPro" id="IPR014027">
    <property type="entry name" value="UDP-Glc/GDP-Man_DH_C"/>
</dbReference>
<dbReference type="InterPro" id="IPR036220">
    <property type="entry name" value="UDP-Glc/GDP-Man_DH_C_sf"/>
</dbReference>
<dbReference type="InterPro" id="IPR014026">
    <property type="entry name" value="UDP-Glc/GDP-Man_DH_dimer"/>
</dbReference>
<dbReference type="InterPro" id="IPR001732">
    <property type="entry name" value="UDP-Glc/GDP-Man_DH_N"/>
</dbReference>
<dbReference type="InterPro" id="IPR028357">
    <property type="entry name" value="UDPglc_DH_bac"/>
</dbReference>
<dbReference type="NCBIfam" id="TIGR03026">
    <property type="entry name" value="NDP-sugDHase"/>
    <property type="match status" value="1"/>
</dbReference>
<dbReference type="NCBIfam" id="NF047673">
    <property type="entry name" value="TeichurnBiosyTuaD"/>
    <property type="match status" value="1"/>
</dbReference>
<dbReference type="PANTHER" id="PTHR43750">
    <property type="entry name" value="UDP-GLUCOSE 6-DEHYDROGENASE TUAD"/>
    <property type="match status" value="1"/>
</dbReference>
<dbReference type="PANTHER" id="PTHR43750:SF3">
    <property type="entry name" value="UDP-GLUCOSE 6-DEHYDROGENASE TUAD"/>
    <property type="match status" value="1"/>
</dbReference>
<dbReference type="Pfam" id="PF00984">
    <property type="entry name" value="UDPG_MGDP_dh"/>
    <property type="match status" value="1"/>
</dbReference>
<dbReference type="Pfam" id="PF03720">
    <property type="entry name" value="UDPG_MGDP_dh_C"/>
    <property type="match status" value="1"/>
</dbReference>
<dbReference type="Pfam" id="PF03721">
    <property type="entry name" value="UDPG_MGDP_dh_N"/>
    <property type="match status" value="1"/>
</dbReference>
<dbReference type="PIRSF" id="PIRSF500134">
    <property type="entry name" value="UDPglc_DH_bac"/>
    <property type="match status" value="1"/>
</dbReference>
<dbReference type="PIRSF" id="PIRSF000124">
    <property type="entry name" value="UDPglc_GDPman_dh"/>
    <property type="match status" value="1"/>
</dbReference>
<dbReference type="SMART" id="SM00984">
    <property type="entry name" value="UDPG_MGDP_dh_C"/>
    <property type="match status" value="1"/>
</dbReference>
<dbReference type="SUPFAM" id="SSF48179">
    <property type="entry name" value="6-phosphogluconate dehydrogenase C-terminal domain-like"/>
    <property type="match status" value="1"/>
</dbReference>
<dbReference type="SUPFAM" id="SSF51735">
    <property type="entry name" value="NAD(P)-binding Rossmann-fold domains"/>
    <property type="match status" value="1"/>
</dbReference>
<dbReference type="SUPFAM" id="SSF52413">
    <property type="entry name" value="UDP-glucose/GDP-mannose dehydrogenase C-terminal domain"/>
    <property type="match status" value="1"/>
</dbReference>
<keyword id="KW-0961">Cell wall biogenesis/degradation</keyword>
<keyword id="KW-0963">Cytoplasm</keyword>
<keyword id="KW-0520">NAD</keyword>
<keyword id="KW-0560">Oxidoreductase</keyword>
<keyword id="KW-0597">Phosphoprotein</keyword>
<keyword id="KW-1185">Reference proteome</keyword>
<keyword id="KW-0346">Stress response</keyword>
<feature type="chain" id="PRO_0000074075" description="UDP-glucose 6-dehydrogenase TuaD">
    <location>
        <begin position="1"/>
        <end position="461"/>
    </location>
</feature>
<feature type="active site" description="Nucleophile" evidence="1">
    <location>
        <position position="261"/>
    </location>
</feature>
<feature type="binding site" evidence="2">
    <location>
        <begin position="3"/>
        <end position="20"/>
    </location>
    <ligand>
        <name>NAD(+)</name>
        <dbReference type="ChEBI" id="CHEBI:57540"/>
    </ligand>
</feature>
<feature type="binding site" evidence="1">
    <location>
        <position position="12"/>
    </location>
    <ligand>
        <name>NAD(+)</name>
        <dbReference type="ChEBI" id="CHEBI:57540"/>
    </ligand>
</feature>
<feature type="binding site" evidence="1">
    <location>
        <position position="31"/>
    </location>
    <ligand>
        <name>NAD(+)</name>
        <dbReference type="ChEBI" id="CHEBI:57540"/>
    </ligand>
</feature>
<feature type="binding site" evidence="1">
    <location>
        <position position="36"/>
    </location>
    <ligand>
        <name>NAD(+)</name>
        <dbReference type="ChEBI" id="CHEBI:57540"/>
    </ligand>
</feature>
<feature type="binding site" evidence="1">
    <location>
        <position position="122"/>
    </location>
    <ligand>
        <name>NAD(+)</name>
        <dbReference type="ChEBI" id="CHEBI:57540"/>
    </ligand>
</feature>
<feature type="binding site" evidence="1">
    <location>
        <begin position="152"/>
        <end position="156"/>
    </location>
    <ligand>
        <name>substrate</name>
    </ligand>
</feature>
<feature type="binding site" evidence="1">
    <location>
        <position position="156"/>
    </location>
    <ligand>
        <name>NAD(+)</name>
        <dbReference type="ChEBI" id="CHEBI:57540"/>
    </ligand>
</feature>
<feature type="binding site" evidence="1">
    <location>
        <position position="205"/>
    </location>
    <ligand>
        <name>substrate</name>
    </ligand>
</feature>
<feature type="binding site" evidence="1">
    <location>
        <position position="209"/>
    </location>
    <ligand>
        <name>substrate</name>
    </ligand>
</feature>
<feature type="binding site" evidence="1">
    <location>
        <begin position="250"/>
        <end position="254"/>
    </location>
    <ligand>
        <name>substrate</name>
    </ligand>
</feature>
<feature type="binding site" evidence="1">
    <location>
        <position position="258"/>
    </location>
    <ligand>
        <name>substrate</name>
    </ligand>
</feature>
<feature type="binding site" evidence="1">
    <location>
        <position position="264"/>
    </location>
    <ligand>
        <name>NAD(+)</name>
        <dbReference type="ChEBI" id="CHEBI:57540"/>
    </ligand>
</feature>
<feature type="binding site" evidence="1">
    <location>
        <position position="321"/>
    </location>
    <ligand>
        <name>substrate</name>
    </ligand>
</feature>
<feature type="binding site" evidence="1">
    <location>
        <position position="328"/>
    </location>
    <ligand>
        <name>NAD(+)</name>
        <dbReference type="ChEBI" id="CHEBI:57540"/>
    </ligand>
</feature>
<reference key="1">
    <citation type="journal article" date="1999" name="Mol. Microbiol.">
        <title>Teichuronic acid operon of Bacillus subtilis 168.</title>
        <authorList>
            <person name="Soldo B."/>
            <person name="Lazarevic V."/>
            <person name="Pagni M."/>
            <person name="Karamata D."/>
        </authorList>
    </citation>
    <scope>NUCLEOTIDE SEQUENCE [GENOMIC DNA]</scope>
    <source>
        <strain>168</strain>
    </source>
</reference>
<reference key="2">
    <citation type="journal article" date="1997" name="Nature">
        <title>The complete genome sequence of the Gram-positive bacterium Bacillus subtilis.</title>
        <authorList>
            <person name="Kunst F."/>
            <person name="Ogasawara N."/>
            <person name="Moszer I."/>
            <person name="Albertini A.M."/>
            <person name="Alloni G."/>
            <person name="Azevedo V."/>
            <person name="Bertero M.G."/>
            <person name="Bessieres P."/>
            <person name="Bolotin A."/>
            <person name="Borchert S."/>
            <person name="Borriss R."/>
            <person name="Boursier L."/>
            <person name="Brans A."/>
            <person name="Braun M."/>
            <person name="Brignell S.C."/>
            <person name="Bron S."/>
            <person name="Brouillet S."/>
            <person name="Bruschi C.V."/>
            <person name="Caldwell B."/>
            <person name="Capuano V."/>
            <person name="Carter N.M."/>
            <person name="Choi S.-K."/>
            <person name="Codani J.-J."/>
            <person name="Connerton I.F."/>
            <person name="Cummings N.J."/>
            <person name="Daniel R.A."/>
            <person name="Denizot F."/>
            <person name="Devine K.M."/>
            <person name="Duesterhoeft A."/>
            <person name="Ehrlich S.D."/>
            <person name="Emmerson P.T."/>
            <person name="Entian K.-D."/>
            <person name="Errington J."/>
            <person name="Fabret C."/>
            <person name="Ferrari E."/>
            <person name="Foulger D."/>
            <person name="Fritz C."/>
            <person name="Fujita M."/>
            <person name="Fujita Y."/>
            <person name="Fuma S."/>
            <person name="Galizzi A."/>
            <person name="Galleron N."/>
            <person name="Ghim S.-Y."/>
            <person name="Glaser P."/>
            <person name="Goffeau A."/>
            <person name="Golightly E.J."/>
            <person name="Grandi G."/>
            <person name="Guiseppi G."/>
            <person name="Guy B.J."/>
            <person name="Haga K."/>
            <person name="Haiech J."/>
            <person name="Harwood C.R."/>
            <person name="Henaut A."/>
            <person name="Hilbert H."/>
            <person name="Holsappel S."/>
            <person name="Hosono S."/>
            <person name="Hullo M.-F."/>
            <person name="Itaya M."/>
            <person name="Jones L.-M."/>
            <person name="Joris B."/>
            <person name="Karamata D."/>
            <person name="Kasahara Y."/>
            <person name="Klaerr-Blanchard M."/>
            <person name="Klein C."/>
            <person name="Kobayashi Y."/>
            <person name="Koetter P."/>
            <person name="Koningstein G."/>
            <person name="Krogh S."/>
            <person name="Kumano M."/>
            <person name="Kurita K."/>
            <person name="Lapidus A."/>
            <person name="Lardinois S."/>
            <person name="Lauber J."/>
            <person name="Lazarevic V."/>
            <person name="Lee S.-M."/>
            <person name="Levine A."/>
            <person name="Liu H."/>
            <person name="Masuda S."/>
            <person name="Mauel C."/>
            <person name="Medigue C."/>
            <person name="Medina N."/>
            <person name="Mellado R.P."/>
            <person name="Mizuno M."/>
            <person name="Moestl D."/>
            <person name="Nakai S."/>
            <person name="Noback M."/>
            <person name="Noone D."/>
            <person name="O'Reilly M."/>
            <person name="Ogawa K."/>
            <person name="Ogiwara A."/>
            <person name="Oudega B."/>
            <person name="Park S.-H."/>
            <person name="Parro V."/>
            <person name="Pohl T.M."/>
            <person name="Portetelle D."/>
            <person name="Porwollik S."/>
            <person name="Prescott A.M."/>
            <person name="Presecan E."/>
            <person name="Pujic P."/>
            <person name="Purnelle B."/>
            <person name="Rapoport G."/>
            <person name="Rey M."/>
            <person name="Reynolds S."/>
            <person name="Rieger M."/>
            <person name="Rivolta C."/>
            <person name="Rocha E."/>
            <person name="Roche B."/>
            <person name="Rose M."/>
            <person name="Sadaie Y."/>
            <person name="Sato T."/>
            <person name="Scanlan E."/>
            <person name="Schleich S."/>
            <person name="Schroeter R."/>
            <person name="Scoffone F."/>
            <person name="Sekiguchi J."/>
            <person name="Sekowska A."/>
            <person name="Seror S.J."/>
            <person name="Serror P."/>
            <person name="Shin B.-S."/>
            <person name="Soldo B."/>
            <person name="Sorokin A."/>
            <person name="Tacconi E."/>
            <person name="Takagi T."/>
            <person name="Takahashi H."/>
            <person name="Takemaru K."/>
            <person name="Takeuchi M."/>
            <person name="Tamakoshi A."/>
            <person name="Tanaka T."/>
            <person name="Terpstra P."/>
            <person name="Tognoni A."/>
            <person name="Tosato V."/>
            <person name="Uchiyama S."/>
            <person name="Vandenbol M."/>
            <person name="Vannier F."/>
            <person name="Vassarotti A."/>
            <person name="Viari A."/>
            <person name="Wambutt R."/>
            <person name="Wedler E."/>
            <person name="Wedler H."/>
            <person name="Weitzenegger T."/>
            <person name="Winters P."/>
            <person name="Wipat A."/>
            <person name="Yamamoto H."/>
            <person name="Yamane K."/>
            <person name="Yasumoto K."/>
            <person name="Yata K."/>
            <person name="Yoshida K."/>
            <person name="Yoshikawa H.-F."/>
            <person name="Zumstein E."/>
            <person name="Yoshikawa H."/>
            <person name="Danchin A."/>
        </authorList>
    </citation>
    <scope>NUCLEOTIDE SEQUENCE [LARGE SCALE GENOMIC DNA]</scope>
    <source>
        <strain>168</strain>
    </source>
</reference>
<reference key="3">
    <citation type="journal article" date="1999" name="Microbiology">
        <title>Assay for UDPglucose 6-dehydrogenase in phosphate-starved cells: gene tuaD of Bacillus subtilis 168 encodes the UDPglucose 6-dehydrogenase involved in teichuronic acid synthesis.</title>
        <authorList>
            <person name="Pagni M."/>
            <person name="Lazarevic V."/>
            <person name="Soldo B."/>
            <person name="Karamata D."/>
        </authorList>
    </citation>
    <scope>CHARACTERIZATION</scope>
    <source>
        <strain>168</strain>
    </source>
</reference>
<reference key="4">
    <citation type="journal article" date="2003" name="EMBO J.">
        <title>Transmembrane modulator-dependent bacterial tyrosine kinase activates UDP-glucose dehydrogenases.</title>
        <authorList>
            <person name="Mijakovic I."/>
            <person name="Poncet S."/>
            <person name="Boel G."/>
            <person name="Maze A."/>
            <person name="Gillet S."/>
            <person name="Jamet E."/>
            <person name="Decottignies P."/>
            <person name="Grangeasse C."/>
            <person name="Doublet P."/>
            <person name="Le Marechal P."/>
            <person name="Deutscher J."/>
        </authorList>
    </citation>
    <scope>PHOSPHORYLATION</scope>
    <scope>ACTIVITY REGULATION</scope>
</reference>
<name>TUAD_BACSU</name>
<comment type="function">
    <text>Catalyzes the conversion of UDP-glucose into UDP-glucuronate, one of the precursors of teichuronic acid.</text>
</comment>
<comment type="catalytic activity">
    <reaction>
        <text>UDP-alpha-D-glucose + 2 NAD(+) + H2O = UDP-alpha-D-glucuronate + 2 NADH + 3 H(+)</text>
        <dbReference type="Rhea" id="RHEA:23596"/>
        <dbReference type="ChEBI" id="CHEBI:15377"/>
        <dbReference type="ChEBI" id="CHEBI:15378"/>
        <dbReference type="ChEBI" id="CHEBI:57540"/>
        <dbReference type="ChEBI" id="CHEBI:57945"/>
        <dbReference type="ChEBI" id="CHEBI:58052"/>
        <dbReference type="ChEBI" id="CHEBI:58885"/>
        <dbReference type="EC" id="1.1.1.22"/>
    </reaction>
</comment>
<comment type="activity regulation">
    <text evidence="3">Activated by phosphorylation; inhibited by dephosphorylation.</text>
</comment>
<comment type="pathway">
    <text>Nucleotide-sugar biosynthesis; UDP-alpha-D-glucuronate biosynthesis; UDP-alpha-D-glucuronate from UDP-alpha-D-glucose: step 1/1.</text>
</comment>
<comment type="subcellular location">
    <subcellularLocation>
        <location>Cytoplasm</location>
    </subcellularLocation>
</comment>
<comment type="induction">
    <text>By phosphate starvation, via the PhoP/PhoR two-component regulatory system.</text>
</comment>
<comment type="PTM">
    <text evidence="3">Phosphorylated by YwqD and dephosphorylated by YwqE in vitro.</text>
</comment>
<comment type="miscellaneous">
    <text>The nature of the anionic polymer present in the cell wall of B.subtilis depends on phosphate availability. Under phosphate-replete growth conditions teichoic acids are present, whereas under phosphate-depleted conditions, at least part of the wall teichoic acid is replaced with teichuronic acid, a non-phosphate containing anionic polymer. The synthesis of teichuronic acid is accompanied by degradation of teichoic acid and reutilization of liberated phosphate for other cellular processes such as nucleic acid synthesis.</text>
</comment>
<comment type="similarity">
    <text evidence="4">Belongs to the UDP-glucose/GDP-mannose dehydrogenase family.</text>
</comment>
<sequence length="461" mass="49816">MKKIAVIGTGYVGLVSGTCFAEIGNKVVCCDIDESKIRSLKNGVIPIYEPGLADLVEKNVLDQRLTFTNDIPSAIRASDIIYIAVGTPMSKTGEADLTYVKAAAKTIGEHLNGYKVIVNKSTVPVGTGKLVQSIVQKASKGRYSFDVVSNPEFLREGSAIHDTMNMERAVIGSTSHKAAAIIEELHQPFHAPVIKTNLESAEMIKYAANAFLATKISFINDIANICERVGADVSKVADGVGLDSRIGRKFLKAGIGFGGSCFPKDTTALLQIAKSAGYPFKLIEAVIETNEKQRVHIVDKLLTVMGSVKGRTISVLGLAFKPNTNDVRSAPALDIIPMLQQLGAHVKAYDPIAIPEASAILGEQVEYYTDVYAAMEDTDACLILTDWPEVKEMELVKVKTLLKQPVIIDGRNLFSLEEMQAAGYIYHSIGRPAVRGTEPSDKYFPGLPLEELAKDLGSVNL</sequence>
<accession>O32271</accession>
<evidence type="ECO:0000250" key="1">
    <source>
        <dbReference type="UniProtKB" id="Q0P8H3"/>
    </source>
</evidence>
<evidence type="ECO:0000255" key="2"/>
<evidence type="ECO:0000269" key="3">
    <source>
    </source>
</evidence>
<evidence type="ECO:0000305" key="4"/>
<proteinExistence type="evidence at protein level"/>
<gene>
    <name type="primary">tuaD</name>
    <name type="synonym">yvhD</name>
    <name type="ordered locus">BSU35580</name>
</gene>
<protein>
    <recommendedName>
        <fullName>UDP-glucose 6-dehydrogenase TuaD</fullName>
        <shortName>UDP-Glc dehydrogenase</shortName>
        <shortName>UDP-GlcDH</shortName>
        <shortName>UDPGDH</shortName>
        <ecNumber>1.1.1.22</ecNumber>
    </recommendedName>
    <alternativeName>
        <fullName>Teichuronic acid biosynthesis protein TuaD</fullName>
    </alternativeName>
</protein>
<organism>
    <name type="scientific">Bacillus subtilis (strain 168)</name>
    <dbReference type="NCBI Taxonomy" id="224308"/>
    <lineage>
        <taxon>Bacteria</taxon>
        <taxon>Bacillati</taxon>
        <taxon>Bacillota</taxon>
        <taxon>Bacilli</taxon>
        <taxon>Bacillales</taxon>
        <taxon>Bacillaceae</taxon>
        <taxon>Bacillus</taxon>
    </lineage>
</organism>